<evidence type="ECO:0000255" key="1">
    <source>
        <dbReference type="HAMAP-Rule" id="MF_00027"/>
    </source>
</evidence>
<organism>
    <name type="scientific">Brucella anthropi (strain ATCC 49188 / DSM 6882 / CCUG 24695 / JCM 21032 / LMG 3331 / NBRC 15819 / NCTC 12168 / Alc 37)</name>
    <name type="common">Ochrobactrum anthropi</name>
    <dbReference type="NCBI Taxonomy" id="439375"/>
    <lineage>
        <taxon>Bacteria</taxon>
        <taxon>Pseudomonadati</taxon>
        <taxon>Pseudomonadota</taxon>
        <taxon>Alphaproteobacteria</taxon>
        <taxon>Hyphomicrobiales</taxon>
        <taxon>Brucellaceae</taxon>
        <taxon>Brucella/Ochrobactrum group</taxon>
        <taxon>Brucella</taxon>
    </lineage>
</organism>
<gene>
    <name evidence="1" type="primary">cobB</name>
    <name type="ordered locus">Oant_1889</name>
</gene>
<dbReference type="EC" id="6.3.5.9" evidence="1"/>
<dbReference type="EMBL" id="CP000758">
    <property type="protein sequence ID" value="ABS14605.1"/>
    <property type="molecule type" value="Genomic_DNA"/>
</dbReference>
<dbReference type="RefSeq" id="WP_012091868.1">
    <property type="nucleotide sequence ID" value="NC_009667.1"/>
</dbReference>
<dbReference type="SMR" id="A6X051"/>
<dbReference type="STRING" id="439375.Oant_1889"/>
<dbReference type="KEGG" id="oan:Oant_1889"/>
<dbReference type="PATRIC" id="fig|439375.7.peg.1989"/>
<dbReference type="eggNOG" id="COG1797">
    <property type="taxonomic scope" value="Bacteria"/>
</dbReference>
<dbReference type="HOGENOM" id="CLU_022752_0_0_5"/>
<dbReference type="PhylomeDB" id="A6X051"/>
<dbReference type="UniPathway" id="UPA00148">
    <property type="reaction ID" value="UER00220"/>
</dbReference>
<dbReference type="Proteomes" id="UP000002301">
    <property type="component" value="Chromosome 1"/>
</dbReference>
<dbReference type="GO" id="GO:0005524">
    <property type="term" value="F:ATP binding"/>
    <property type="evidence" value="ECO:0007669"/>
    <property type="project" value="UniProtKB-UniRule"/>
</dbReference>
<dbReference type="GO" id="GO:0042242">
    <property type="term" value="F:cobyrinic acid a,c-diamide synthase activity"/>
    <property type="evidence" value="ECO:0007669"/>
    <property type="project" value="InterPro"/>
</dbReference>
<dbReference type="GO" id="GO:0043802">
    <property type="term" value="F:hydrogenobyrinic acid a,c-diamide synthase (glutamine-hydrolysing) activity"/>
    <property type="evidence" value="ECO:0007669"/>
    <property type="project" value="UniProtKB-UniRule"/>
</dbReference>
<dbReference type="GO" id="GO:0009236">
    <property type="term" value="P:cobalamin biosynthetic process"/>
    <property type="evidence" value="ECO:0007669"/>
    <property type="project" value="UniProtKB-UniRule"/>
</dbReference>
<dbReference type="Gene3D" id="3.40.50.880">
    <property type="match status" value="1"/>
</dbReference>
<dbReference type="Gene3D" id="3.40.50.300">
    <property type="entry name" value="P-loop containing nucleotide triphosphate hydrolases"/>
    <property type="match status" value="1"/>
</dbReference>
<dbReference type="HAMAP" id="MF_00027">
    <property type="entry name" value="CobB_CbiA"/>
    <property type="match status" value="1"/>
</dbReference>
<dbReference type="InterPro" id="IPR004484">
    <property type="entry name" value="CbiA/CobB_synth"/>
</dbReference>
<dbReference type="InterPro" id="IPR029062">
    <property type="entry name" value="Class_I_gatase-like"/>
</dbReference>
<dbReference type="InterPro" id="IPR002586">
    <property type="entry name" value="CobQ/CobB/MinD/ParA_Nub-bd_dom"/>
</dbReference>
<dbReference type="InterPro" id="IPR011698">
    <property type="entry name" value="GATase_3"/>
</dbReference>
<dbReference type="InterPro" id="IPR027417">
    <property type="entry name" value="P-loop_NTPase"/>
</dbReference>
<dbReference type="NCBIfam" id="TIGR00379">
    <property type="entry name" value="cobB"/>
    <property type="match status" value="1"/>
</dbReference>
<dbReference type="NCBIfam" id="NF002204">
    <property type="entry name" value="PRK01077.1"/>
    <property type="match status" value="1"/>
</dbReference>
<dbReference type="PANTHER" id="PTHR43873">
    <property type="entry name" value="COBYRINATE A,C-DIAMIDE SYNTHASE"/>
    <property type="match status" value="1"/>
</dbReference>
<dbReference type="PANTHER" id="PTHR43873:SF1">
    <property type="entry name" value="COBYRINATE A,C-DIAMIDE SYNTHASE"/>
    <property type="match status" value="1"/>
</dbReference>
<dbReference type="Pfam" id="PF01656">
    <property type="entry name" value="CbiA"/>
    <property type="match status" value="1"/>
</dbReference>
<dbReference type="Pfam" id="PF07685">
    <property type="entry name" value="GATase_3"/>
    <property type="match status" value="1"/>
</dbReference>
<dbReference type="SUPFAM" id="SSF52317">
    <property type="entry name" value="Class I glutamine amidotransferase-like"/>
    <property type="match status" value="1"/>
</dbReference>
<dbReference type="SUPFAM" id="SSF52540">
    <property type="entry name" value="P-loop containing nucleoside triphosphate hydrolases"/>
    <property type="match status" value="1"/>
</dbReference>
<dbReference type="PROSITE" id="PS51274">
    <property type="entry name" value="GATASE_COBBQ"/>
    <property type="match status" value="1"/>
</dbReference>
<reference key="1">
    <citation type="journal article" date="2011" name="J. Bacteriol.">
        <title>Genome of Ochrobactrum anthropi ATCC 49188 T, a versatile opportunistic pathogen and symbiont of several eukaryotic hosts.</title>
        <authorList>
            <person name="Chain P.S."/>
            <person name="Lang D.M."/>
            <person name="Comerci D.J."/>
            <person name="Malfatti S.A."/>
            <person name="Vergez L.M."/>
            <person name="Shin M."/>
            <person name="Ugalde R.A."/>
            <person name="Garcia E."/>
            <person name="Tolmasky M.E."/>
        </authorList>
    </citation>
    <scope>NUCLEOTIDE SEQUENCE [LARGE SCALE GENOMIC DNA]</scope>
    <source>
        <strain>ATCC 49188 / DSM 6882 / CCUG 24695 / JCM 21032 / LMG 3331 / NBRC 15819 / NCTC 12168 / Alc 37</strain>
    </source>
</reference>
<name>COBB_BRUA4</name>
<keyword id="KW-0067">ATP-binding</keyword>
<keyword id="KW-0169">Cobalamin biosynthesis</keyword>
<keyword id="KW-0315">Glutamine amidotransferase</keyword>
<keyword id="KW-0436">Ligase</keyword>
<keyword id="KW-0460">Magnesium</keyword>
<keyword id="KW-0547">Nucleotide-binding</keyword>
<keyword id="KW-1185">Reference proteome</keyword>
<proteinExistence type="inferred from homology"/>
<accession>A6X051</accession>
<protein>
    <recommendedName>
        <fullName evidence="1">Hydrogenobyrinate a,c-diamide synthase</fullName>
        <ecNumber evidence="1">6.3.5.9</ecNumber>
    </recommendedName>
    <alternativeName>
        <fullName evidence="1">Hydrogenobyrinic acid a,c-diamide synthase</fullName>
    </alternativeName>
</protein>
<feature type="chain" id="PRO_1000002294" description="Hydrogenobyrinate a,c-diamide synthase">
    <location>
        <begin position="1"/>
        <end position="436"/>
    </location>
</feature>
<feature type="domain" description="GATase cobBQ-type" evidence="1">
    <location>
        <begin position="244"/>
        <end position="435"/>
    </location>
</feature>
<feature type="active site" description="Nucleophile" evidence="1">
    <location>
        <position position="327"/>
    </location>
</feature>
<feature type="site" description="Increases nucleophilicity of active site Cys" evidence="1">
    <location>
        <position position="427"/>
    </location>
</feature>
<sequence>MKGFMIAAPASGSGKTTVTLGLLRALKRRGEALAPVKAGPDYIDPAYHKAASGVDCFNLDPWAMRPELISALSSRMTESGARLLVAEGMMGLFDGAMDGKGSSADLARLLDLPVVLVVDCARQSHSIAALVWGFSQFRKDVLIAGIILNRVGSSRHEAMLRGALEPLRIPVLGALPRDTALSLPERHLGLVQAGEHSDLESFLEHAADTMETHIDLDALQTIWSRPKRFDAMANVPRLKPLGNHIAVARDDAFAFAYAHLFEGWRRRGVEISFFSPLGDESPRQDADAIYLPGGYPELHAGRLAQAGRFQAGIREAAARGVTVYGECGGYMVLGESLQDAEGVAHPMLGLLQLETSFAKRKLHLGYRVLEPLEGSPWTEPLKAHEFHYASIVREGKADRLFRVRDAVGDDVGEAGLRVGSVSGSFMHVIDFCGEKA</sequence>
<comment type="function">
    <text evidence="1">Catalyzes the ATP-dependent amidation of the two carboxylate groups at positions a and c of hydrogenobyrinate, using either L-glutamine or ammonia as the nitrogen source.</text>
</comment>
<comment type="catalytic activity">
    <reaction evidence="1">
        <text>hydrogenobyrinate + 2 L-glutamine + 2 ATP + 2 H2O = hydrogenobyrinate a,c-diamide + 2 L-glutamate + 2 ADP + 2 phosphate + 2 H(+)</text>
        <dbReference type="Rhea" id="RHEA:12544"/>
        <dbReference type="ChEBI" id="CHEBI:15377"/>
        <dbReference type="ChEBI" id="CHEBI:15378"/>
        <dbReference type="ChEBI" id="CHEBI:29985"/>
        <dbReference type="ChEBI" id="CHEBI:30616"/>
        <dbReference type="ChEBI" id="CHEBI:43474"/>
        <dbReference type="ChEBI" id="CHEBI:58359"/>
        <dbReference type="ChEBI" id="CHEBI:77873"/>
        <dbReference type="ChEBI" id="CHEBI:77874"/>
        <dbReference type="ChEBI" id="CHEBI:456216"/>
        <dbReference type="EC" id="6.3.5.9"/>
    </reaction>
</comment>
<comment type="cofactor">
    <cofactor evidence="1">
        <name>Mg(2+)</name>
        <dbReference type="ChEBI" id="CHEBI:18420"/>
    </cofactor>
</comment>
<comment type="pathway">
    <text evidence="1">Cofactor biosynthesis; adenosylcobalamin biosynthesis; cob(II)yrinate a,c-diamide from precorrin-2 (aerobic route): step 9/10.</text>
</comment>
<comment type="domain">
    <text evidence="1">Comprises of two domains. The C-terminal domain contains the binding site for glutamine and catalyzes the hydrolysis of this substrate to glutamate and ammonia. The N-terminal domain is anticipated to bind ATP and hydrogenobyrinate and catalyzes the ultimate synthesis of the diamide product. The ammonia produced via the glutaminase domain is probably translocated to the adjacent domain via a molecular tunnel, where it reacts with an activated intermediate.</text>
</comment>
<comment type="miscellaneous">
    <text evidence="1">The a and c carboxylates of hydrogenobyrinate are activated for nucleophilic attack via formation of a phosphorylated intermediate by ATP. CobB catalyzes first the amidation of the c-carboxylate, and then that of the a-carboxylate.</text>
</comment>
<comment type="similarity">
    <text evidence="1">Belongs to the CobB/CbiA family.</text>
</comment>